<keyword id="KW-0963">Cytoplasm</keyword>
<keyword id="KW-0269">Exonuclease</keyword>
<keyword id="KW-0378">Hydrolase</keyword>
<keyword id="KW-0433">Leucine-rich repeat</keyword>
<keyword id="KW-0460">Magnesium</keyword>
<keyword id="KW-0479">Metal-binding</keyword>
<keyword id="KW-0540">Nuclease</keyword>
<keyword id="KW-0539">Nucleus</keyword>
<keyword id="KW-1185">Reference proteome</keyword>
<keyword id="KW-0677">Repeat</keyword>
<keyword id="KW-0694">RNA-binding</keyword>
<keyword id="KW-0804">Transcription</keyword>
<keyword id="KW-0805">Transcription regulation</keyword>
<evidence type="ECO:0000250" key="1"/>
<evidence type="ECO:0000250" key="2">
    <source>
        <dbReference type="UniProtKB" id="O95551"/>
    </source>
</evidence>
<evidence type="ECO:0000250" key="3">
    <source>
        <dbReference type="UniProtKB" id="P31384"/>
    </source>
</evidence>
<evidence type="ECO:0000256" key="4">
    <source>
        <dbReference type="SAM" id="MobiDB-lite"/>
    </source>
</evidence>
<evidence type="ECO:0000305" key="5"/>
<reference key="1">
    <citation type="journal article" date="2004" name="Nature">
        <title>Genome evolution in yeasts.</title>
        <authorList>
            <person name="Dujon B."/>
            <person name="Sherman D."/>
            <person name="Fischer G."/>
            <person name="Durrens P."/>
            <person name="Casaregola S."/>
            <person name="Lafontaine I."/>
            <person name="de Montigny J."/>
            <person name="Marck C."/>
            <person name="Neuveglise C."/>
            <person name="Talla E."/>
            <person name="Goffard N."/>
            <person name="Frangeul L."/>
            <person name="Aigle M."/>
            <person name="Anthouard V."/>
            <person name="Babour A."/>
            <person name="Barbe V."/>
            <person name="Barnay S."/>
            <person name="Blanchin S."/>
            <person name="Beckerich J.-M."/>
            <person name="Beyne E."/>
            <person name="Bleykasten C."/>
            <person name="Boisrame A."/>
            <person name="Boyer J."/>
            <person name="Cattolico L."/>
            <person name="Confanioleri F."/>
            <person name="de Daruvar A."/>
            <person name="Despons L."/>
            <person name="Fabre E."/>
            <person name="Fairhead C."/>
            <person name="Ferry-Dumazet H."/>
            <person name="Groppi A."/>
            <person name="Hantraye F."/>
            <person name="Hennequin C."/>
            <person name="Jauniaux N."/>
            <person name="Joyet P."/>
            <person name="Kachouri R."/>
            <person name="Kerrest A."/>
            <person name="Koszul R."/>
            <person name="Lemaire M."/>
            <person name="Lesur I."/>
            <person name="Ma L."/>
            <person name="Muller H."/>
            <person name="Nicaud J.-M."/>
            <person name="Nikolski M."/>
            <person name="Oztas S."/>
            <person name="Ozier-Kalogeropoulos O."/>
            <person name="Pellenz S."/>
            <person name="Potier S."/>
            <person name="Richard G.-F."/>
            <person name="Straub M.-L."/>
            <person name="Suleau A."/>
            <person name="Swennen D."/>
            <person name="Tekaia F."/>
            <person name="Wesolowski-Louvel M."/>
            <person name="Westhof E."/>
            <person name="Wirth B."/>
            <person name="Zeniou-Meyer M."/>
            <person name="Zivanovic Y."/>
            <person name="Bolotin-Fukuhara M."/>
            <person name="Thierry A."/>
            <person name="Bouchier C."/>
            <person name="Caudron B."/>
            <person name="Scarpelli C."/>
            <person name="Gaillardin C."/>
            <person name="Weissenbach J."/>
            <person name="Wincker P."/>
            <person name="Souciet J.-L."/>
        </authorList>
    </citation>
    <scope>NUCLEOTIDE SEQUENCE [LARGE SCALE GENOMIC DNA]</scope>
    <source>
        <strain>ATCC 36239 / CBS 767 / BCRC 21394 / JCM 1990 / NBRC 0083 / IGC 2968</strain>
    </source>
</reference>
<sequence length="831" mass="96108">MNIPKYQQAQVQGQQPNLQAQQILLQQLQQGQSQQSQPSIGGSGSAGQFSQQDIYNDNIAQQGLYQNSYQRPVQAQQPPQLQNIHQQQQFFPQQFSSQQQNQPQASSLQQYQQQQQQQQQQQQQQQQQQQQQQQQQQQQQPQIHLPQQYQQSQGQQVPHQPPHIQQQQFFNQQAAALQQQQQQQQQQQQQQQQPAQKLNSINIENPNSIYWQHQQQLCQLSRNANIPHYYARQYAANSRKNKNPYSDVKTVSLIDATRSIVSALNEQENSKSNPGSATNSALLQNKKLAQDLDDDHLQEEQRMRQKTQGRQLWCQLDLSGQGLVNLSPKLFQYDFLESLYLNNNKLTSVPPIVNKLRSLRTLDLSHNRINEVPSELGMCFNLRYLYLFDNNIKTLPNEFGNLIELLFLGIEGNPIDLKIANLVAEKGTKELIAYLRDLKPSFSKPPPRQWLLLEDDGEIIDPINNPDAYTNDNNNSDTNDTFTMMSYNTLCQHYATTKMYKYTPSWALEWGFRRAALQEEVLHFKSDLVCMQEVETRTFHEFWVPVMQGFGYKGVFFNKTRSKTMSESDSKKVDGCATFYKTDKFELLHKQNFEYNSVCMGSDKYKKTKDLFNRFMNKDNIALITYFNHIQTGEKILFVNTHLHWDPAFNDVKTLQVGILLEELRTIMKKYHHTNSIDEIKNASMVICGDFNSTKENAVYQLFSTGAVSNHEDLEGRDYGKFTDEGFRHSFKLKSAYDHVGELPFTTISPAFTDAIDYIWYSTPTLQVKGLLGKIDEEYSSHCIGFPNAHFPSDHIPLVTKFQIKKSGGNKKPDFKPDFKPDFKSGSSRKT</sequence>
<accession>Q6BMM5</accession>
<name>CCR4_DEBHA</name>
<proteinExistence type="inferred from homology"/>
<gene>
    <name type="primary">CCR4</name>
    <name type="ordered locus">DEHA2F04136g</name>
</gene>
<dbReference type="EC" id="3.1.13.4"/>
<dbReference type="EMBL" id="CR382138">
    <property type="protein sequence ID" value="CAG88862.2"/>
    <property type="molecule type" value="Genomic_DNA"/>
</dbReference>
<dbReference type="RefSeq" id="XP_460546.2">
    <property type="nucleotide sequence ID" value="XM_460546.1"/>
</dbReference>
<dbReference type="SMR" id="Q6BMM5"/>
<dbReference type="FunCoup" id="Q6BMM5">
    <property type="interactions" value="486"/>
</dbReference>
<dbReference type="STRING" id="284592.Q6BMM5"/>
<dbReference type="GeneID" id="2903197"/>
<dbReference type="KEGG" id="dha:DEHA2F04136g"/>
<dbReference type="VEuPathDB" id="FungiDB:DEHA2F04136g"/>
<dbReference type="eggNOG" id="KOG0620">
    <property type="taxonomic scope" value="Eukaryota"/>
</dbReference>
<dbReference type="HOGENOM" id="CLU_016428_4_1_1"/>
<dbReference type="InParanoid" id="Q6BMM5"/>
<dbReference type="OMA" id="LWHAIDF"/>
<dbReference type="OrthoDB" id="428734at2759"/>
<dbReference type="Proteomes" id="UP000000599">
    <property type="component" value="Chromosome F"/>
</dbReference>
<dbReference type="GO" id="GO:0030015">
    <property type="term" value="C:CCR4-NOT core complex"/>
    <property type="evidence" value="ECO:0007669"/>
    <property type="project" value="EnsemblFungi"/>
</dbReference>
<dbReference type="GO" id="GO:0016593">
    <property type="term" value="C:Cdc73/Paf1 complex"/>
    <property type="evidence" value="ECO:0007669"/>
    <property type="project" value="EnsemblFungi"/>
</dbReference>
<dbReference type="GO" id="GO:0000932">
    <property type="term" value="C:P-body"/>
    <property type="evidence" value="ECO:0007669"/>
    <property type="project" value="EnsemblFungi"/>
</dbReference>
<dbReference type="GO" id="GO:0046872">
    <property type="term" value="F:metal ion binding"/>
    <property type="evidence" value="ECO:0007669"/>
    <property type="project" value="UniProtKB-KW"/>
</dbReference>
<dbReference type="GO" id="GO:0004535">
    <property type="term" value="F:poly(A)-specific ribonuclease activity"/>
    <property type="evidence" value="ECO:0007669"/>
    <property type="project" value="UniProtKB-EC"/>
</dbReference>
<dbReference type="GO" id="GO:0003723">
    <property type="term" value="F:RNA binding"/>
    <property type="evidence" value="ECO:0007669"/>
    <property type="project" value="UniProtKB-KW"/>
</dbReference>
<dbReference type="GO" id="GO:0006260">
    <property type="term" value="P:DNA replication"/>
    <property type="evidence" value="ECO:0007669"/>
    <property type="project" value="EnsemblFungi"/>
</dbReference>
<dbReference type="GO" id="GO:0000076">
    <property type="term" value="P:DNA replication checkpoint signaling"/>
    <property type="evidence" value="ECO:0007669"/>
    <property type="project" value="EnsemblFungi"/>
</dbReference>
<dbReference type="GO" id="GO:0000289">
    <property type="term" value="P:nuclear-transcribed mRNA poly(A) tail shortening"/>
    <property type="evidence" value="ECO:0007669"/>
    <property type="project" value="EnsemblFungi"/>
</dbReference>
<dbReference type="GO" id="GO:0032968">
    <property type="term" value="P:positive regulation of transcription elongation by RNA polymerase II"/>
    <property type="evidence" value="ECO:0007669"/>
    <property type="project" value="EnsemblFungi"/>
</dbReference>
<dbReference type="GO" id="GO:0006368">
    <property type="term" value="P:transcription elongation by RNA polymerase II"/>
    <property type="evidence" value="ECO:0007669"/>
    <property type="project" value="EnsemblFungi"/>
</dbReference>
<dbReference type="GO" id="GO:0007089">
    <property type="term" value="P:traversing start control point of mitotic cell cycle"/>
    <property type="evidence" value="ECO:0007669"/>
    <property type="project" value="EnsemblFungi"/>
</dbReference>
<dbReference type="CDD" id="cd09097">
    <property type="entry name" value="Deadenylase_CCR4"/>
    <property type="match status" value="1"/>
</dbReference>
<dbReference type="FunFam" id="3.60.10.10:FF:000037">
    <property type="entry name" value="Glucose-repressible alcohol dehydrogenase transcriptional effector"/>
    <property type="match status" value="1"/>
</dbReference>
<dbReference type="Gene3D" id="3.60.10.10">
    <property type="entry name" value="Endonuclease/exonuclease/phosphatase"/>
    <property type="match status" value="1"/>
</dbReference>
<dbReference type="Gene3D" id="3.80.10.10">
    <property type="entry name" value="Ribonuclease Inhibitor"/>
    <property type="match status" value="1"/>
</dbReference>
<dbReference type="InterPro" id="IPR050410">
    <property type="entry name" value="CCR4/nocturin_mRNA_transcr"/>
</dbReference>
<dbReference type="InterPro" id="IPR036691">
    <property type="entry name" value="Endo/exonu/phosph_ase_sf"/>
</dbReference>
<dbReference type="InterPro" id="IPR005135">
    <property type="entry name" value="Endo/exonuclease/phosphatase"/>
</dbReference>
<dbReference type="InterPro" id="IPR001611">
    <property type="entry name" value="Leu-rich_rpt"/>
</dbReference>
<dbReference type="InterPro" id="IPR025875">
    <property type="entry name" value="Leu-rich_rpt_4"/>
</dbReference>
<dbReference type="InterPro" id="IPR003591">
    <property type="entry name" value="Leu-rich_rpt_typical-subtyp"/>
</dbReference>
<dbReference type="InterPro" id="IPR032675">
    <property type="entry name" value="LRR_dom_sf"/>
</dbReference>
<dbReference type="PANTHER" id="PTHR12121">
    <property type="entry name" value="CARBON CATABOLITE REPRESSOR PROTEIN 4"/>
    <property type="match status" value="1"/>
</dbReference>
<dbReference type="PANTHER" id="PTHR12121:SF100">
    <property type="entry name" value="POLY(A)-SPECIFIC RIBONUCLEASE"/>
    <property type="match status" value="1"/>
</dbReference>
<dbReference type="Pfam" id="PF03372">
    <property type="entry name" value="Exo_endo_phos"/>
    <property type="match status" value="1"/>
</dbReference>
<dbReference type="Pfam" id="PF00560">
    <property type="entry name" value="LRR_1"/>
    <property type="match status" value="1"/>
</dbReference>
<dbReference type="Pfam" id="PF12799">
    <property type="entry name" value="LRR_4"/>
    <property type="match status" value="1"/>
</dbReference>
<dbReference type="SMART" id="SM00369">
    <property type="entry name" value="LRR_TYP"/>
    <property type="match status" value="3"/>
</dbReference>
<dbReference type="SUPFAM" id="SSF56219">
    <property type="entry name" value="DNase I-like"/>
    <property type="match status" value="1"/>
</dbReference>
<dbReference type="SUPFAM" id="SSF52058">
    <property type="entry name" value="L domain-like"/>
    <property type="match status" value="1"/>
</dbReference>
<dbReference type="PROSITE" id="PS51450">
    <property type="entry name" value="LRR"/>
    <property type="match status" value="4"/>
</dbReference>
<feature type="chain" id="PRO_0000290611" description="CCR4-Not complex 3'-5'-exoribonuclease subunit Ccr4">
    <location>
        <begin position="1"/>
        <end position="831"/>
    </location>
</feature>
<feature type="repeat" description="LRR 1">
    <location>
        <begin position="311"/>
        <end position="333"/>
    </location>
</feature>
<feature type="repeat" description="LRR 2">
    <location>
        <begin position="335"/>
        <end position="356"/>
    </location>
</feature>
<feature type="repeat" description="LRR 3">
    <location>
        <begin position="358"/>
        <end position="379"/>
    </location>
</feature>
<feature type="repeat" description="LRR 4">
    <location>
        <begin position="381"/>
        <end position="402"/>
    </location>
</feature>
<feature type="repeat" description="LRR 5">
    <location>
        <begin position="404"/>
        <end position="426"/>
    </location>
</feature>
<feature type="region of interest" description="Disordered" evidence="4">
    <location>
        <begin position="29"/>
        <end position="50"/>
    </location>
</feature>
<feature type="region of interest" description="Disordered" evidence="4">
    <location>
        <begin position="142"/>
        <end position="163"/>
    </location>
</feature>
<feature type="region of interest" description="Disordered" evidence="4">
    <location>
        <begin position="806"/>
        <end position="831"/>
    </location>
</feature>
<feature type="compositionally biased region" description="Basic and acidic residues" evidence="4">
    <location>
        <begin position="811"/>
        <end position="823"/>
    </location>
</feature>
<feature type="binding site" evidence="2">
    <location>
        <position position="533"/>
    </location>
    <ligand>
        <name>Mg(2+)</name>
        <dbReference type="ChEBI" id="CHEBI:18420"/>
    </ligand>
</feature>
<organism>
    <name type="scientific">Debaryomyces hansenii (strain ATCC 36239 / CBS 767 / BCRC 21394 / JCM 1990 / NBRC 0083 / IGC 2968)</name>
    <name type="common">Yeast</name>
    <name type="synonym">Torulaspora hansenii</name>
    <dbReference type="NCBI Taxonomy" id="284592"/>
    <lineage>
        <taxon>Eukaryota</taxon>
        <taxon>Fungi</taxon>
        <taxon>Dikarya</taxon>
        <taxon>Ascomycota</taxon>
        <taxon>Saccharomycotina</taxon>
        <taxon>Pichiomycetes</taxon>
        <taxon>Debaryomycetaceae</taxon>
        <taxon>Debaryomyces</taxon>
    </lineage>
</organism>
<protein>
    <recommendedName>
        <fullName evidence="5">CCR4-Not complex 3'-5'-exoribonuclease subunit Ccr4</fullName>
        <ecNumber>3.1.13.4</ecNumber>
    </recommendedName>
    <alternativeName>
        <fullName>Carbon catabolite repressor protein 4</fullName>
    </alternativeName>
    <alternativeName>
        <fullName>Cytoplasmic deadenylase</fullName>
    </alternativeName>
    <alternativeName>
        <fullName>Glucose-repressible alcohol dehydrogenase transcriptional effector</fullName>
    </alternativeName>
</protein>
<comment type="function">
    <text evidence="3">Acts as a catalytic component of the CCR4-NOT core complex, which in the nucleus seems to be a general transcription factor, and in the cytoplasm the major mRNA deadenylase involved in mRNA turnover (By similarity). Ccr4 has 3'-5' RNase activity with a strong preference for polyadenylated substrates and also low exonuclease activity towards single-stranded DNA (By similarity).</text>
</comment>
<comment type="catalytic activity">
    <reaction>
        <text>Exonucleolytic cleavage of poly(A) to 5'-AMP.</text>
        <dbReference type="EC" id="3.1.13.4"/>
    </reaction>
</comment>
<comment type="cofactor">
    <cofactor evidence="1">
        <name>Mg(2+)</name>
        <dbReference type="ChEBI" id="CHEBI:18420"/>
    </cofactor>
</comment>
<comment type="subcellular location">
    <subcellularLocation>
        <location evidence="1">Cytoplasm</location>
    </subcellularLocation>
    <subcellularLocation>
        <location evidence="1">Nucleus</location>
    </subcellularLocation>
</comment>
<comment type="similarity">
    <text evidence="5">Belongs to the CCR4/nocturin family.</text>
</comment>